<reference key="1">
    <citation type="journal article" date="2004" name="Nucleic Acids Res.">
        <title>Unique features revealed by the genome sequence of Acinetobacter sp. ADP1, a versatile and naturally transformation competent bacterium.</title>
        <authorList>
            <person name="Barbe V."/>
            <person name="Vallenet D."/>
            <person name="Fonknechten N."/>
            <person name="Kreimeyer A."/>
            <person name="Oztas S."/>
            <person name="Labarre L."/>
            <person name="Cruveiller S."/>
            <person name="Robert C."/>
            <person name="Duprat S."/>
            <person name="Wincker P."/>
            <person name="Ornston L.N."/>
            <person name="Weissenbach J."/>
            <person name="Marliere P."/>
            <person name="Cohen G.N."/>
            <person name="Medigue C."/>
        </authorList>
    </citation>
    <scope>NUCLEOTIDE SEQUENCE [LARGE SCALE GENOMIC DNA]</scope>
    <source>
        <strain>ATCC 33305 / BD413 / ADP1</strain>
    </source>
</reference>
<gene>
    <name type="ordered locus">ACIAD0282</name>
</gene>
<accession>Q6FFB3</accession>
<proteinExistence type="inferred from homology"/>
<name>FETP_ACIAD</name>
<comment type="function">
    <text evidence="1">Could be a mediator in iron transactions between iron acquisition and iron-requiring processes, such as synthesis and/or repair of Fe-S clusters in biosynthetic enzymes.</text>
</comment>
<comment type="similarity">
    <text evidence="1">Belongs to the Fe(2+)-trafficking protein family.</text>
</comment>
<feature type="chain" id="PRO_0000214466" description="Probable Fe(2+)-trafficking protein">
    <location>
        <begin position="1"/>
        <end position="90"/>
    </location>
</feature>
<sequence length="90" mass="10745">MTRLVFCRKYQQEMEGLDFAPFPGAKGQEFFDNVSKQAWQEWLQHQTTLINEKRLNVFEPEAKKFLEEQREKFFNNDASVEKAEGWKPEA</sequence>
<keyword id="KW-0408">Iron</keyword>
<evidence type="ECO:0000255" key="1">
    <source>
        <dbReference type="HAMAP-Rule" id="MF_00686"/>
    </source>
</evidence>
<organism>
    <name type="scientific">Acinetobacter baylyi (strain ATCC 33305 / BD413 / ADP1)</name>
    <dbReference type="NCBI Taxonomy" id="62977"/>
    <lineage>
        <taxon>Bacteria</taxon>
        <taxon>Pseudomonadati</taxon>
        <taxon>Pseudomonadota</taxon>
        <taxon>Gammaproteobacteria</taxon>
        <taxon>Moraxellales</taxon>
        <taxon>Moraxellaceae</taxon>
        <taxon>Acinetobacter</taxon>
    </lineage>
</organism>
<protein>
    <recommendedName>
        <fullName evidence="1">Probable Fe(2+)-trafficking protein</fullName>
    </recommendedName>
</protein>
<dbReference type="EMBL" id="CR543861">
    <property type="protein sequence ID" value="CAG67244.1"/>
    <property type="molecule type" value="Genomic_DNA"/>
</dbReference>
<dbReference type="RefSeq" id="WP_004920664.1">
    <property type="nucleotide sequence ID" value="NC_005966.1"/>
</dbReference>
<dbReference type="SMR" id="Q6FFB3"/>
<dbReference type="STRING" id="202950.GCA_001485005_00553"/>
<dbReference type="GeneID" id="45232793"/>
<dbReference type="KEGG" id="aci:ACIAD0282"/>
<dbReference type="eggNOG" id="COG2924">
    <property type="taxonomic scope" value="Bacteria"/>
</dbReference>
<dbReference type="HOGENOM" id="CLU_170994_0_0_6"/>
<dbReference type="OrthoDB" id="9804318at2"/>
<dbReference type="BioCyc" id="ASP62977:ACIAD_RS01320-MONOMER"/>
<dbReference type="Proteomes" id="UP000000430">
    <property type="component" value="Chromosome"/>
</dbReference>
<dbReference type="GO" id="GO:0005829">
    <property type="term" value="C:cytosol"/>
    <property type="evidence" value="ECO:0007669"/>
    <property type="project" value="TreeGrafter"/>
</dbReference>
<dbReference type="GO" id="GO:0005506">
    <property type="term" value="F:iron ion binding"/>
    <property type="evidence" value="ECO:0007669"/>
    <property type="project" value="UniProtKB-UniRule"/>
</dbReference>
<dbReference type="GO" id="GO:0034599">
    <property type="term" value="P:cellular response to oxidative stress"/>
    <property type="evidence" value="ECO:0007669"/>
    <property type="project" value="TreeGrafter"/>
</dbReference>
<dbReference type="Gene3D" id="1.10.3880.10">
    <property type="entry name" value="Fe(II) trafficking protein YggX"/>
    <property type="match status" value="1"/>
</dbReference>
<dbReference type="HAMAP" id="MF_00686">
    <property type="entry name" value="Fe_traffic_YggX"/>
    <property type="match status" value="1"/>
</dbReference>
<dbReference type="InterPro" id="IPR007457">
    <property type="entry name" value="Fe_traffick_prot_YggX"/>
</dbReference>
<dbReference type="InterPro" id="IPR036766">
    <property type="entry name" value="Fe_traffick_prot_YggX_sf"/>
</dbReference>
<dbReference type="NCBIfam" id="NF003817">
    <property type="entry name" value="PRK05408.1"/>
    <property type="match status" value="1"/>
</dbReference>
<dbReference type="PANTHER" id="PTHR36965">
    <property type="entry name" value="FE(2+)-TRAFFICKING PROTEIN-RELATED"/>
    <property type="match status" value="1"/>
</dbReference>
<dbReference type="PANTHER" id="PTHR36965:SF1">
    <property type="entry name" value="FE(2+)-TRAFFICKING PROTEIN-RELATED"/>
    <property type="match status" value="1"/>
</dbReference>
<dbReference type="Pfam" id="PF04362">
    <property type="entry name" value="Iron_traffic"/>
    <property type="match status" value="1"/>
</dbReference>
<dbReference type="PIRSF" id="PIRSF029827">
    <property type="entry name" value="Fe_traffic_YggX"/>
    <property type="match status" value="1"/>
</dbReference>
<dbReference type="SUPFAM" id="SSF111148">
    <property type="entry name" value="YggX-like"/>
    <property type="match status" value="1"/>
</dbReference>